<proteinExistence type="evidence at protein level"/>
<name>ETV3_HUMAN</name>
<sequence length="512" mass="57001">MKAGCSIVEKPEGGGGYQFPDWAYKTESSPGSRQIQLWHFILELLQKEEFRHVIAWQQGEYGEFVIKDPDEVARLWGRRKCKPQMNYDKLSRALRYYYNKRILHKTKGKRFTYKFNFNKLVMPNYPFINIRSSGVVPQSAPPVPTASSRFHFPPLDTHSPTNDVQPGRFSASSLTASGQESSNGTDRKTELSELEDGSAADWRRGVDPVSSRNAIGGGGIGHQKRKPDIMLPLFARPGMYPDPHSPFAVSPIPGRGGVLNVPISPALSLTPTIFSYSPSPGLSPFTSSSCFSFNPEEMKHYLHSQACSVFNYHLSPRTFPRYPGLMVPPLQCQMHPEESTQFSIKLQPPPVGRKNRERVESSEESAPVTTPTMASIPPRIKVEPASEKDPESLRQSAREKEEHTQEEGTVPSRTIEEEKGTIFARPAAPPIWPSVPISTPSGEPLEVTEDSEDRPGKEPSAPEKKEDALMPPKLRLKRRWNDDPEARELSKSGKFLWNGSGPQGLATAAADA</sequence>
<protein>
    <recommendedName>
        <fullName>ETS translocation variant 3</fullName>
    </recommendedName>
    <alternativeName>
        <fullName>ETS domain transcriptional repressor PE1</fullName>
        <shortName>PE-1</shortName>
    </alternativeName>
    <alternativeName>
        <fullName>Mitogenic Ets transcriptional suppressor</fullName>
    </alternativeName>
</protein>
<feature type="chain" id="PRO_0000204114" description="ETS translocation variant 3">
    <location>
        <begin position="1"/>
        <end position="512"/>
    </location>
</feature>
<feature type="DNA-binding region" description="ETS" evidence="2">
    <location>
        <begin position="35"/>
        <end position="116"/>
    </location>
</feature>
<feature type="region of interest" description="Disordered" evidence="3">
    <location>
        <begin position="136"/>
        <end position="222"/>
    </location>
</feature>
<feature type="region of interest" description="Disordered" evidence="3">
    <location>
        <begin position="336"/>
        <end position="512"/>
    </location>
</feature>
<feature type="compositionally biased region" description="Polar residues" evidence="3">
    <location>
        <begin position="158"/>
        <end position="184"/>
    </location>
</feature>
<feature type="compositionally biased region" description="Basic and acidic residues" evidence="3">
    <location>
        <begin position="380"/>
        <end position="406"/>
    </location>
</feature>
<feature type="compositionally biased region" description="Basic and acidic residues" evidence="3">
    <location>
        <begin position="453"/>
        <end position="468"/>
    </location>
</feature>
<feature type="compositionally biased region" description="Basic and acidic residues" evidence="3">
    <location>
        <begin position="479"/>
        <end position="491"/>
    </location>
</feature>
<feature type="modified residue" description="Phosphoserine" evidence="9 10">
    <location>
        <position position="139"/>
    </location>
</feature>
<feature type="modified residue" description="Phosphoserine" evidence="10">
    <location>
        <position position="159"/>
    </location>
</feature>
<feature type="modified residue" description="Phosphoserine" evidence="1">
    <location>
        <position position="315"/>
    </location>
</feature>
<feature type="modified residue" description="N6-acetyllysine; alternate" evidence="8">
    <location>
        <position position="388"/>
    </location>
</feature>
<feature type="cross-link" description="Glycyl lysine isopeptide (Lys-Gly) (interchain with G-Cter in SUMO2)" evidence="11 12 13">
    <location>
        <position position="381"/>
    </location>
</feature>
<feature type="cross-link" description="Glycyl lysine isopeptide (Lys-Gly) (interchain with G-Cter in SUMO2); alternate" evidence="13">
    <location>
        <position position="388"/>
    </location>
</feature>
<feature type="splice variant" id="VSP_013351" description="In isoform 2." evidence="5 6">
    <original>VVPQSAPPV</original>
    <variation>KIQTLLVGN</variation>
    <location>
        <begin position="135"/>
        <end position="143"/>
    </location>
</feature>
<feature type="splice variant" id="VSP_013352" description="In isoform 2." evidence="5 6">
    <location>
        <begin position="144"/>
        <end position="512"/>
    </location>
</feature>
<dbReference type="EMBL" id="AF218540">
    <property type="protein sequence ID" value="AAK56846.1"/>
    <property type="molecule type" value="mRNA"/>
</dbReference>
<dbReference type="EMBL" id="AK304789">
    <property type="protein sequence ID" value="BAG65539.1"/>
    <property type="molecule type" value="mRNA"/>
</dbReference>
<dbReference type="EMBL" id="AK316274">
    <property type="protein sequence ID" value="BAH14645.1"/>
    <property type="molecule type" value="mRNA"/>
</dbReference>
<dbReference type="EMBL" id="AL157713">
    <property type="status" value="NOT_ANNOTATED_CDS"/>
    <property type="molecule type" value="Genomic_DNA"/>
</dbReference>
<dbReference type="EMBL" id="CH471121">
    <property type="protein sequence ID" value="EAW52888.1"/>
    <property type="molecule type" value="Genomic_DNA"/>
</dbReference>
<dbReference type="EMBL" id="BC022868">
    <property type="protein sequence ID" value="AAH22868.1"/>
    <property type="molecule type" value="mRNA"/>
</dbReference>
<dbReference type="EMBL" id="L16464">
    <property type="protein sequence ID" value="AAA60949.1"/>
    <property type="status" value="ALT_FRAME"/>
    <property type="molecule type" value="mRNA"/>
</dbReference>
<dbReference type="CCDS" id="CCDS1164.1">
    <molecule id="P41162-2"/>
</dbReference>
<dbReference type="CCDS" id="CCDS44250.1">
    <molecule id="P41162-1"/>
</dbReference>
<dbReference type="PIR" id="A54308">
    <property type="entry name" value="A54308"/>
</dbReference>
<dbReference type="RefSeq" id="NP_001138784.1">
    <molecule id="P41162-1"/>
    <property type="nucleotide sequence ID" value="NM_001145312.3"/>
</dbReference>
<dbReference type="RefSeq" id="NP_005231.1">
    <molecule id="P41162-2"/>
    <property type="nucleotide sequence ID" value="NM_005240.3"/>
</dbReference>
<dbReference type="RefSeq" id="XP_006711273.1">
    <molecule id="P41162-1"/>
    <property type="nucleotide sequence ID" value="XM_006711210.3"/>
</dbReference>
<dbReference type="RefSeq" id="XP_054191068.1">
    <molecule id="P41162-1"/>
    <property type="nucleotide sequence ID" value="XM_054335093.1"/>
</dbReference>
<dbReference type="SMR" id="P41162"/>
<dbReference type="BioGRID" id="108418">
    <property type="interactions" value="145"/>
</dbReference>
<dbReference type="FunCoup" id="P41162">
    <property type="interactions" value="2816"/>
</dbReference>
<dbReference type="IntAct" id="P41162">
    <property type="interactions" value="116"/>
</dbReference>
<dbReference type="MINT" id="P41162"/>
<dbReference type="STRING" id="9606.ENSP00000357175"/>
<dbReference type="GlyGen" id="P41162">
    <property type="glycosylation" value="1 site"/>
</dbReference>
<dbReference type="iPTMnet" id="P41162"/>
<dbReference type="PhosphoSitePlus" id="P41162"/>
<dbReference type="BioMuta" id="ETV3"/>
<dbReference type="DMDM" id="62512143"/>
<dbReference type="jPOST" id="P41162"/>
<dbReference type="MassIVE" id="P41162"/>
<dbReference type="PaxDb" id="9606-ENSP00000357175"/>
<dbReference type="PeptideAtlas" id="P41162"/>
<dbReference type="ProteomicsDB" id="55408">
    <molecule id="P41162-1"/>
</dbReference>
<dbReference type="ProteomicsDB" id="55409">
    <molecule id="P41162-2"/>
</dbReference>
<dbReference type="Pumba" id="P41162"/>
<dbReference type="Antibodypedia" id="1438">
    <property type="antibodies" value="66 antibodies from 18 providers"/>
</dbReference>
<dbReference type="DNASU" id="2117"/>
<dbReference type="Ensembl" id="ENST00000326786.4">
    <molecule id="P41162-2"/>
    <property type="protein sequence ID" value="ENSP00000327316.4"/>
    <property type="gene ID" value="ENSG00000117036.12"/>
</dbReference>
<dbReference type="Ensembl" id="ENST00000368192.9">
    <molecule id="P41162-1"/>
    <property type="protein sequence ID" value="ENSP00000357175.4"/>
    <property type="gene ID" value="ENSG00000117036.12"/>
</dbReference>
<dbReference type="GeneID" id="2117"/>
<dbReference type="KEGG" id="hsa:2117"/>
<dbReference type="MANE-Select" id="ENST00000368192.9">
    <property type="protein sequence ID" value="ENSP00000357175.4"/>
    <property type="RefSeq nucleotide sequence ID" value="NM_001145312.3"/>
    <property type="RefSeq protein sequence ID" value="NP_001138784.1"/>
</dbReference>
<dbReference type="UCSC" id="uc001fqr.3">
    <molecule id="P41162-1"/>
    <property type="organism name" value="human"/>
</dbReference>
<dbReference type="AGR" id="HGNC:3492"/>
<dbReference type="CTD" id="2117"/>
<dbReference type="DisGeNET" id="2117"/>
<dbReference type="GeneCards" id="ETV3"/>
<dbReference type="HGNC" id="HGNC:3492">
    <property type="gene designation" value="ETV3"/>
</dbReference>
<dbReference type="HPA" id="ENSG00000117036">
    <property type="expression patterns" value="Low tissue specificity"/>
</dbReference>
<dbReference type="MIM" id="164873">
    <property type="type" value="gene"/>
</dbReference>
<dbReference type="neXtProt" id="NX_P41162"/>
<dbReference type="OpenTargets" id="ENSG00000117036"/>
<dbReference type="PharmGKB" id="PA27906"/>
<dbReference type="VEuPathDB" id="HostDB:ENSG00000117036"/>
<dbReference type="eggNOG" id="KOG3806">
    <property type="taxonomic scope" value="Eukaryota"/>
</dbReference>
<dbReference type="GeneTree" id="ENSGT00940000160963"/>
<dbReference type="HOGENOM" id="CLU_023454_1_0_1"/>
<dbReference type="InParanoid" id="P41162"/>
<dbReference type="OMA" id="DTHSPTN"/>
<dbReference type="OrthoDB" id="10067219at2759"/>
<dbReference type="PAN-GO" id="P41162">
    <property type="GO annotations" value="4 GO annotations based on evolutionary models"/>
</dbReference>
<dbReference type="PhylomeDB" id="P41162"/>
<dbReference type="TreeFam" id="TF351065"/>
<dbReference type="PathwayCommons" id="P41162"/>
<dbReference type="SignaLink" id="P41162"/>
<dbReference type="SIGNOR" id="P41162"/>
<dbReference type="BioGRID-ORCS" id="2117">
    <property type="hits" value="16 hits in 1182 CRISPR screens"/>
</dbReference>
<dbReference type="ChiTaRS" id="ETV3">
    <property type="organism name" value="human"/>
</dbReference>
<dbReference type="GenomeRNAi" id="2117"/>
<dbReference type="Pharos" id="P41162">
    <property type="development level" value="Tbio"/>
</dbReference>
<dbReference type="PRO" id="PR:P41162"/>
<dbReference type="Proteomes" id="UP000005640">
    <property type="component" value="Chromosome 1"/>
</dbReference>
<dbReference type="RNAct" id="P41162">
    <property type="molecule type" value="protein"/>
</dbReference>
<dbReference type="Bgee" id="ENSG00000117036">
    <property type="expression patterns" value="Expressed in upper arm skin and 187 other cell types or tissues"/>
</dbReference>
<dbReference type="GO" id="GO:0000785">
    <property type="term" value="C:chromatin"/>
    <property type="evidence" value="ECO:0000247"/>
    <property type="project" value="NTNU_SB"/>
</dbReference>
<dbReference type="GO" id="GO:0043231">
    <property type="term" value="C:intracellular membrane-bounded organelle"/>
    <property type="evidence" value="ECO:0000314"/>
    <property type="project" value="HPA"/>
</dbReference>
<dbReference type="GO" id="GO:0005654">
    <property type="term" value="C:nucleoplasm"/>
    <property type="evidence" value="ECO:0000314"/>
    <property type="project" value="HPA"/>
</dbReference>
<dbReference type="GO" id="GO:0005634">
    <property type="term" value="C:nucleus"/>
    <property type="evidence" value="ECO:0000318"/>
    <property type="project" value="GO_Central"/>
</dbReference>
<dbReference type="GO" id="GO:0090571">
    <property type="term" value="C:RNA polymerase II transcription repressor complex"/>
    <property type="evidence" value="ECO:0007669"/>
    <property type="project" value="Ensembl"/>
</dbReference>
<dbReference type="GO" id="GO:0017151">
    <property type="term" value="F:DEAD/H-box RNA helicase binding"/>
    <property type="evidence" value="ECO:0007669"/>
    <property type="project" value="Ensembl"/>
</dbReference>
<dbReference type="GO" id="GO:0000981">
    <property type="term" value="F:DNA-binding transcription factor activity, RNA polymerase II-specific"/>
    <property type="evidence" value="ECO:0000247"/>
    <property type="project" value="NTNU_SB"/>
</dbReference>
<dbReference type="GO" id="GO:0001227">
    <property type="term" value="F:DNA-binding transcription repressor activity, RNA polymerase II-specific"/>
    <property type="evidence" value="ECO:0007669"/>
    <property type="project" value="Ensembl"/>
</dbReference>
<dbReference type="GO" id="GO:0000977">
    <property type="term" value="F:RNA polymerase II transcription regulatory region sequence-specific DNA binding"/>
    <property type="evidence" value="ECO:0007669"/>
    <property type="project" value="Ensembl"/>
</dbReference>
<dbReference type="GO" id="GO:1990837">
    <property type="term" value="F:sequence-specific double-stranded DNA binding"/>
    <property type="evidence" value="ECO:0000314"/>
    <property type="project" value="ARUK-UCL"/>
</dbReference>
<dbReference type="GO" id="GO:0030154">
    <property type="term" value="P:cell differentiation"/>
    <property type="evidence" value="ECO:0000318"/>
    <property type="project" value="GO_Central"/>
</dbReference>
<dbReference type="GO" id="GO:0097011">
    <property type="term" value="P:cellular response to granulocyte macrophage colony-stimulating factor stimulus"/>
    <property type="evidence" value="ECO:0007669"/>
    <property type="project" value="Ensembl"/>
</dbReference>
<dbReference type="GO" id="GO:0008285">
    <property type="term" value="P:negative regulation of cell population proliferation"/>
    <property type="evidence" value="ECO:0007669"/>
    <property type="project" value="Ensembl"/>
</dbReference>
<dbReference type="GO" id="GO:0006357">
    <property type="term" value="P:regulation of transcription by RNA polymerase II"/>
    <property type="evidence" value="ECO:0000318"/>
    <property type="project" value="GO_Central"/>
</dbReference>
<dbReference type="FunFam" id="1.10.10.10:FF:000059">
    <property type="entry name" value="ETS translocation variant 3"/>
    <property type="match status" value="1"/>
</dbReference>
<dbReference type="Gene3D" id="1.10.10.10">
    <property type="entry name" value="Winged helix-like DNA-binding domain superfamily/Winged helix DNA-binding domain"/>
    <property type="match status" value="1"/>
</dbReference>
<dbReference type="InterPro" id="IPR000418">
    <property type="entry name" value="Ets_dom"/>
</dbReference>
<dbReference type="InterPro" id="IPR046328">
    <property type="entry name" value="ETS_fam"/>
</dbReference>
<dbReference type="InterPro" id="IPR036388">
    <property type="entry name" value="WH-like_DNA-bd_sf"/>
</dbReference>
<dbReference type="InterPro" id="IPR036390">
    <property type="entry name" value="WH_DNA-bd_sf"/>
</dbReference>
<dbReference type="PANTHER" id="PTHR11849">
    <property type="entry name" value="ETS"/>
    <property type="match status" value="1"/>
</dbReference>
<dbReference type="PANTHER" id="PTHR11849:SF30">
    <property type="entry name" value="ETS TRANSLOCATION VARIANT 3"/>
    <property type="match status" value="1"/>
</dbReference>
<dbReference type="Pfam" id="PF00178">
    <property type="entry name" value="Ets"/>
    <property type="match status" value="1"/>
</dbReference>
<dbReference type="PRINTS" id="PR00454">
    <property type="entry name" value="ETSDOMAIN"/>
</dbReference>
<dbReference type="SMART" id="SM00413">
    <property type="entry name" value="ETS"/>
    <property type="match status" value="1"/>
</dbReference>
<dbReference type="SUPFAM" id="SSF46785">
    <property type="entry name" value="Winged helix' DNA-binding domain"/>
    <property type="match status" value="1"/>
</dbReference>
<dbReference type="PROSITE" id="PS00345">
    <property type="entry name" value="ETS_DOMAIN_1"/>
    <property type="match status" value="1"/>
</dbReference>
<dbReference type="PROSITE" id="PS00346">
    <property type="entry name" value="ETS_DOMAIN_2"/>
    <property type="match status" value="1"/>
</dbReference>
<dbReference type="PROSITE" id="PS50061">
    <property type="entry name" value="ETS_DOMAIN_3"/>
    <property type="match status" value="1"/>
</dbReference>
<organism>
    <name type="scientific">Homo sapiens</name>
    <name type="common">Human</name>
    <dbReference type="NCBI Taxonomy" id="9606"/>
    <lineage>
        <taxon>Eukaryota</taxon>
        <taxon>Metazoa</taxon>
        <taxon>Chordata</taxon>
        <taxon>Craniata</taxon>
        <taxon>Vertebrata</taxon>
        <taxon>Euteleostomi</taxon>
        <taxon>Mammalia</taxon>
        <taxon>Eutheria</taxon>
        <taxon>Euarchontoglires</taxon>
        <taxon>Primates</taxon>
        <taxon>Haplorrhini</taxon>
        <taxon>Catarrhini</taxon>
        <taxon>Hominidae</taxon>
        <taxon>Homo</taxon>
    </lineage>
</organism>
<gene>
    <name type="primary">ETV3</name>
    <name type="synonym">METS</name>
    <name type="synonym">PE1</name>
</gene>
<keyword id="KW-0007">Acetylation</keyword>
<keyword id="KW-0025">Alternative splicing</keyword>
<keyword id="KW-0238">DNA-binding</keyword>
<keyword id="KW-1017">Isopeptide bond</keyword>
<keyword id="KW-0539">Nucleus</keyword>
<keyword id="KW-0597">Phosphoprotein</keyword>
<keyword id="KW-1267">Proteomics identification</keyword>
<keyword id="KW-1185">Reference proteome</keyword>
<keyword id="KW-0678">Repressor</keyword>
<keyword id="KW-0804">Transcription</keyword>
<keyword id="KW-0805">Transcription regulation</keyword>
<keyword id="KW-0832">Ubl conjugation</keyword>
<reference key="1">
    <citation type="journal article" date="2002" name="Cell">
        <title>An induced Ets repressor complex regulates growth arrest during terminal macrophage differentiation.</title>
        <authorList>
            <person name="Klappacher G.W."/>
            <person name="Lunyak V.V."/>
            <person name="Sykes D.B."/>
            <person name="Sawka-Verhelle D."/>
            <person name="Sage J."/>
            <person name="Brard G."/>
            <person name="Ngo S.D."/>
            <person name="Gangadharan D."/>
            <person name="Jacks T."/>
            <person name="Kamps M.P."/>
            <person name="Rose D.W."/>
            <person name="Rosenfeld M.G."/>
            <person name="Glass C.K."/>
        </authorList>
    </citation>
    <scope>NUCLEOTIDE SEQUENCE [MRNA] (ISOFORM 2)</scope>
    <scope>FUNCTION</scope>
</reference>
<reference key="2">
    <citation type="journal article" date="2004" name="Nat. Genet.">
        <title>Complete sequencing and characterization of 21,243 full-length human cDNAs.</title>
        <authorList>
            <person name="Ota T."/>
            <person name="Suzuki Y."/>
            <person name="Nishikawa T."/>
            <person name="Otsuki T."/>
            <person name="Sugiyama T."/>
            <person name="Irie R."/>
            <person name="Wakamatsu A."/>
            <person name="Hayashi K."/>
            <person name="Sato H."/>
            <person name="Nagai K."/>
            <person name="Kimura K."/>
            <person name="Makita H."/>
            <person name="Sekine M."/>
            <person name="Obayashi M."/>
            <person name="Nishi T."/>
            <person name="Shibahara T."/>
            <person name="Tanaka T."/>
            <person name="Ishii S."/>
            <person name="Yamamoto J."/>
            <person name="Saito K."/>
            <person name="Kawai Y."/>
            <person name="Isono Y."/>
            <person name="Nakamura Y."/>
            <person name="Nagahari K."/>
            <person name="Murakami K."/>
            <person name="Yasuda T."/>
            <person name="Iwayanagi T."/>
            <person name="Wagatsuma M."/>
            <person name="Shiratori A."/>
            <person name="Sudo H."/>
            <person name="Hosoiri T."/>
            <person name="Kaku Y."/>
            <person name="Kodaira H."/>
            <person name="Kondo H."/>
            <person name="Sugawara M."/>
            <person name="Takahashi M."/>
            <person name="Kanda K."/>
            <person name="Yokoi T."/>
            <person name="Furuya T."/>
            <person name="Kikkawa E."/>
            <person name="Omura Y."/>
            <person name="Abe K."/>
            <person name="Kamihara K."/>
            <person name="Katsuta N."/>
            <person name="Sato K."/>
            <person name="Tanikawa M."/>
            <person name="Yamazaki M."/>
            <person name="Ninomiya K."/>
            <person name="Ishibashi T."/>
            <person name="Yamashita H."/>
            <person name="Murakawa K."/>
            <person name="Fujimori K."/>
            <person name="Tanai H."/>
            <person name="Kimata M."/>
            <person name="Watanabe M."/>
            <person name="Hiraoka S."/>
            <person name="Chiba Y."/>
            <person name="Ishida S."/>
            <person name="Ono Y."/>
            <person name="Takiguchi S."/>
            <person name="Watanabe S."/>
            <person name="Yosida M."/>
            <person name="Hotuta T."/>
            <person name="Kusano J."/>
            <person name="Kanehori K."/>
            <person name="Takahashi-Fujii A."/>
            <person name="Hara H."/>
            <person name="Tanase T.-O."/>
            <person name="Nomura Y."/>
            <person name="Togiya S."/>
            <person name="Komai F."/>
            <person name="Hara R."/>
            <person name="Takeuchi K."/>
            <person name="Arita M."/>
            <person name="Imose N."/>
            <person name="Musashino K."/>
            <person name="Yuuki H."/>
            <person name="Oshima A."/>
            <person name="Sasaki N."/>
            <person name="Aotsuka S."/>
            <person name="Yoshikawa Y."/>
            <person name="Matsunawa H."/>
            <person name="Ichihara T."/>
            <person name="Shiohata N."/>
            <person name="Sano S."/>
            <person name="Moriya S."/>
            <person name="Momiyama H."/>
            <person name="Satoh N."/>
            <person name="Takami S."/>
            <person name="Terashima Y."/>
            <person name="Suzuki O."/>
            <person name="Nakagawa S."/>
            <person name="Senoh A."/>
            <person name="Mizoguchi H."/>
            <person name="Goto Y."/>
            <person name="Shimizu F."/>
            <person name="Wakebe H."/>
            <person name="Hishigaki H."/>
            <person name="Watanabe T."/>
            <person name="Sugiyama A."/>
            <person name="Takemoto M."/>
            <person name="Kawakami B."/>
            <person name="Yamazaki M."/>
            <person name="Watanabe K."/>
            <person name="Kumagai A."/>
            <person name="Itakura S."/>
            <person name="Fukuzumi Y."/>
            <person name="Fujimori Y."/>
            <person name="Komiyama M."/>
            <person name="Tashiro H."/>
            <person name="Tanigami A."/>
            <person name="Fujiwara T."/>
            <person name="Ono T."/>
            <person name="Yamada K."/>
            <person name="Fujii Y."/>
            <person name="Ozaki K."/>
            <person name="Hirao M."/>
            <person name="Ohmori Y."/>
            <person name="Kawabata A."/>
            <person name="Hikiji T."/>
            <person name="Kobatake N."/>
            <person name="Inagaki H."/>
            <person name="Ikema Y."/>
            <person name="Okamoto S."/>
            <person name="Okitani R."/>
            <person name="Kawakami T."/>
            <person name="Noguchi S."/>
            <person name="Itoh T."/>
            <person name="Shigeta K."/>
            <person name="Senba T."/>
            <person name="Matsumura K."/>
            <person name="Nakajima Y."/>
            <person name="Mizuno T."/>
            <person name="Morinaga M."/>
            <person name="Sasaki M."/>
            <person name="Togashi T."/>
            <person name="Oyama M."/>
            <person name="Hata H."/>
            <person name="Watanabe M."/>
            <person name="Komatsu T."/>
            <person name="Mizushima-Sugano J."/>
            <person name="Satoh T."/>
            <person name="Shirai Y."/>
            <person name="Takahashi Y."/>
            <person name="Nakagawa K."/>
            <person name="Okumura K."/>
            <person name="Nagase T."/>
            <person name="Nomura N."/>
            <person name="Kikuchi H."/>
            <person name="Masuho Y."/>
            <person name="Yamashita R."/>
            <person name="Nakai K."/>
            <person name="Yada T."/>
            <person name="Nakamura Y."/>
            <person name="Ohara O."/>
            <person name="Isogai T."/>
            <person name="Sugano S."/>
        </authorList>
    </citation>
    <scope>NUCLEOTIDE SEQUENCE [LARGE SCALE MRNA] (ISOFORM 1)</scope>
    <source>
        <tissue>Brain</tissue>
        <tissue>Uterus</tissue>
    </source>
</reference>
<reference key="3">
    <citation type="journal article" date="2006" name="Nature">
        <title>The DNA sequence and biological annotation of human chromosome 1.</title>
        <authorList>
            <person name="Gregory S.G."/>
            <person name="Barlow K.F."/>
            <person name="McLay K.E."/>
            <person name="Kaul R."/>
            <person name="Swarbreck D."/>
            <person name="Dunham A."/>
            <person name="Scott C.E."/>
            <person name="Howe K.L."/>
            <person name="Woodfine K."/>
            <person name="Spencer C.C.A."/>
            <person name="Jones M.C."/>
            <person name="Gillson C."/>
            <person name="Searle S."/>
            <person name="Zhou Y."/>
            <person name="Kokocinski F."/>
            <person name="McDonald L."/>
            <person name="Evans R."/>
            <person name="Phillips K."/>
            <person name="Atkinson A."/>
            <person name="Cooper R."/>
            <person name="Jones C."/>
            <person name="Hall R.E."/>
            <person name="Andrews T.D."/>
            <person name="Lloyd C."/>
            <person name="Ainscough R."/>
            <person name="Almeida J.P."/>
            <person name="Ambrose K.D."/>
            <person name="Anderson F."/>
            <person name="Andrew R.W."/>
            <person name="Ashwell R.I.S."/>
            <person name="Aubin K."/>
            <person name="Babbage A.K."/>
            <person name="Bagguley C.L."/>
            <person name="Bailey J."/>
            <person name="Beasley H."/>
            <person name="Bethel G."/>
            <person name="Bird C.P."/>
            <person name="Bray-Allen S."/>
            <person name="Brown J.Y."/>
            <person name="Brown A.J."/>
            <person name="Buckley D."/>
            <person name="Burton J."/>
            <person name="Bye J."/>
            <person name="Carder C."/>
            <person name="Chapman J.C."/>
            <person name="Clark S.Y."/>
            <person name="Clarke G."/>
            <person name="Clee C."/>
            <person name="Cobley V."/>
            <person name="Collier R.E."/>
            <person name="Corby N."/>
            <person name="Coville G.J."/>
            <person name="Davies J."/>
            <person name="Deadman R."/>
            <person name="Dunn M."/>
            <person name="Earthrowl M."/>
            <person name="Ellington A.G."/>
            <person name="Errington H."/>
            <person name="Frankish A."/>
            <person name="Frankland J."/>
            <person name="French L."/>
            <person name="Garner P."/>
            <person name="Garnett J."/>
            <person name="Gay L."/>
            <person name="Ghori M.R.J."/>
            <person name="Gibson R."/>
            <person name="Gilby L.M."/>
            <person name="Gillett W."/>
            <person name="Glithero R.J."/>
            <person name="Grafham D.V."/>
            <person name="Griffiths C."/>
            <person name="Griffiths-Jones S."/>
            <person name="Grocock R."/>
            <person name="Hammond S."/>
            <person name="Harrison E.S.I."/>
            <person name="Hart E."/>
            <person name="Haugen E."/>
            <person name="Heath P.D."/>
            <person name="Holmes S."/>
            <person name="Holt K."/>
            <person name="Howden P.J."/>
            <person name="Hunt A.R."/>
            <person name="Hunt S.E."/>
            <person name="Hunter G."/>
            <person name="Isherwood J."/>
            <person name="James R."/>
            <person name="Johnson C."/>
            <person name="Johnson D."/>
            <person name="Joy A."/>
            <person name="Kay M."/>
            <person name="Kershaw J.K."/>
            <person name="Kibukawa M."/>
            <person name="Kimberley A.M."/>
            <person name="King A."/>
            <person name="Knights A.J."/>
            <person name="Lad H."/>
            <person name="Laird G."/>
            <person name="Lawlor S."/>
            <person name="Leongamornlert D.A."/>
            <person name="Lloyd D.M."/>
            <person name="Loveland J."/>
            <person name="Lovell J."/>
            <person name="Lush M.J."/>
            <person name="Lyne R."/>
            <person name="Martin S."/>
            <person name="Mashreghi-Mohammadi M."/>
            <person name="Matthews L."/>
            <person name="Matthews N.S.W."/>
            <person name="McLaren S."/>
            <person name="Milne S."/>
            <person name="Mistry S."/>
            <person name="Moore M.J.F."/>
            <person name="Nickerson T."/>
            <person name="O'Dell C.N."/>
            <person name="Oliver K."/>
            <person name="Palmeiri A."/>
            <person name="Palmer S.A."/>
            <person name="Parker A."/>
            <person name="Patel D."/>
            <person name="Pearce A.V."/>
            <person name="Peck A.I."/>
            <person name="Pelan S."/>
            <person name="Phelps K."/>
            <person name="Phillimore B.J."/>
            <person name="Plumb R."/>
            <person name="Rajan J."/>
            <person name="Raymond C."/>
            <person name="Rouse G."/>
            <person name="Saenphimmachak C."/>
            <person name="Sehra H.K."/>
            <person name="Sheridan E."/>
            <person name="Shownkeen R."/>
            <person name="Sims S."/>
            <person name="Skuce C.D."/>
            <person name="Smith M."/>
            <person name="Steward C."/>
            <person name="Subramanian S."/>
            <person name="Sycamore N."/>
            <person name="Tracey A."/>
            <person name="Tromans A."/>
            <person name="Van Helmond Z."/>
            <person name="Wall M."/>
            <person name="Wallis J.M."/>
            <person name="White S."/>
            <person name="Whitehead S.L."/>
            <person name="Wilkinson J.E."/>
            <person name="Willey D.L."/>
            <person name="Williams H."/>
            <person name="Wilming L."/>
            <person name="Wray P.W."/>
            <person name="Wu Z."/>
            <person name="Coulson A."/>
            <person name="Vaudin M."/>
            <person name="Sulston J.E."/>
            <person name="Durbin R.M."/>
            <person name="Hubbard T."/>
            <person name="Wooster R."/>
            <person name="Dunham I."/>
            <person name="Carter N.P."/>
            <person name="McVean G."/>
            <person name="Ross M.T."/>
            <person name="Harrow J."/>
            <person name="Olson M.V."/>
            <person name="Beck S."/>
            <person name="Rogers J."/>
            <person name="Bentley D.R."/>
        </authorList>
    </citation>
    <scope>NUCLEOTIDE SEQUENCE [LARGE SCALE GENOMIC DNA]</scope>
</reference>
<reference key="4">
    <citation type="submission" date="2005-09" db="EMBL/GenBank/DDBJ databases">
        <authorList>
            <person name="Mural R.J."/>
            <person name="Istrail S."/>
            <person name="Sutton G."/>
            <person name="Florea L."/>
            <person name="Halpern A.L."/>
            <person name="Mobarry C.M."/>
            <person name="Lippert R."/>
            <person name="Walenz B."/>
            <person name="Shatkay H."/>
            <person name="Dew I."/>
            <person name="Miller J.R."/>
            <person name="Flanigan M.J."/>
            <person name="Edwards N.J."/>
            <person name="Bolanos R."/>
            <person name="Fasulo D."/>
            <person name="Halldorsson B.V."/>
            <person name="Hannenhalli S."/>
            <person name="Turner R."/>
            <person name="Yooseph S."/>
            <person name="Lu F."/>
            <person name="Nusskern D.R."/>
            <person name="Shue B.C."/>
            <person name="Zheng X.H."/>
            <person name="Zhong F."/>
            <person name="Delcher A.L."/>
            <person name="Huson D.H."/>
            <person name="Kravitz S.A."/>
            <person name="Mouchard L."/>
            <person name="Reinert K."/>
            <person name="Remington K.A."/>
            <person name="Clark A.G."/>
            <person name="Waterman M.S."/>
            <person name="Eichler E.E."/>
            <person name="Adams M.D."/>
            <person name="Hunkapiller M.W."/>
            <person name="Myers E.W."/>
            <person name="Venter J.C."/>
        </authorList>
    </citation>
    <scope>NUCLEOTIDE SEQUENCE [LARGE SCALE GENOMIC DNA]</scope>
</reference>
<reference key="5">
    <citation type="journal article" date="2004" name="Genome Res.">
        <title>The status, quality, and expansion of the NIH full-length cDNA project: the Mammalian Gene Collection (MGC).</title>
        <authorList>
            <consortium name="The MGC Project Team"/>
        </authorList>
    </citation>
    <scope>NUCLEOTIDE SEQUENCE [LARGE SCALE MRNA] (ISOFORM 2)</scope>
    <source>
        <tissue>Bone marrow</tissue>
    </source>
</reference>
<reference key="6">
    <citation type="journal article" date="1994" name="Genomics">
        <title>PE-1, a novel ETS oncogene family member, localizes to chromosome 1q21-q23.</title>
        <authorList>
            <person name="Klemsz M."/>
            <person name="Hromas R."/>
            <person name="Raskind W."/>
            <person name="Bruno E."/>
            <person name="Hoffman R."/>
        </authorList>
    </citation>
    <scope>NUCLEOTIDE SEQUENCE [MRNA] OF 1-262 (ISOFORM 1)</scope>
</reference>
<reference key="7">
    <citation type="journal article" date="2009" name="Sci. Signal.">
        <title>Quantitative phosphoproteomic analysis of T cell receptor signaling reveals system-wide modulation of protein-protein interactions.</title>
        <authorList>
            <person name="Mayya V."/>
            <person name="Lundgren D.H."/>
            <person name="Hwang S.-I."/>
            <person name="Rezaul K."/>
            <person name="Wu L."/>
            <person name="Eng J.K."/>
            <person name="Rodionov V."/>
            <person name="Han D.K."/>
        </authorList>
    </citation>
    <scope>PHOSPHORYLATION [LARGE SCALE ANALYSIS] AT SER-139</scope>
    <scope>IDENTIFICATION BY MASS SPECTROMETRY [LARGE SCALE ANALYSIS]</scope>
    <source>
        <tissue>Leukemic T-cell</tissue>
    </source>
</reference>
<reference key="8">
    <citation type="journal article" date="2009" name="Science">
        <title>Lysine acetylation targets protein complexes and co-regulates major cellular functions.</title>
        <authorList>
            <person name="Choudhary C."/>
            <person name="Kumar C."/>
            <person name="Gnad F."/>
            <person name="Nielsen M.L."/>
            <person name="Rehman M."/>
            <person name="Walther T.C."/>
            <person name="Olsen J.V."/>
            <person name="Mann M."/>
        </authorList>
    </citation>
    <scope>ACETYLATION [LARGE SCALE ANALYSIS] AT LYS-388</scope>
    <scope>IDENTIFICATION BY MASS SPECTROMETRY [LARGE SCALE ANALYSIS]</scope>
</reference>
<reference key="9">
    <citation type="journal article" date="2013" name="J. Proteome Res.">
        <title>Toward a comprehensive characterization of a human cancer cell phosphoproteome.</title>
        <authorList>
            <person name="Zhou H."/>
            <person name="Di Palma S."/>
            <person name="Preisinger C."/>
            <person name="Peng M."/>
            <person name="Polat A.N."/>
            <person name="Heck A.J."/>
            <person name="Mohammed S."/>
        </authorList>
    </citation>
    <scope>PHOSPHORYLATION [LARGE SCALE ANALYSIS] AT SER-139 AND SER-159</scope>
    <scope>IDENTIFICATION BY MASS SPECTROMETRY [LARGE SCALE ANALYSIS]</scope>
    <source>
        <tissue>Cervix carcinoma</tissue>
        <tissue>Erythroleukemia</tissue>
    </source>
</reference>
<reference key="10">
    <citation type="journal article" date="2014" name="Nat. Struct. Mol. Biol.">
        <title>Uncovering global SUMOylation signaling networks in a site-specific manner.</title>
        <authorList>
            <person name="Hendriks I.A."/>
            <person name="D'Souza R.C."/>
            <person name="Yang B."/>
            <person name="Verlaan-de Vries M."/>
            <person name="Mann M."/>
            <person name="Vertegaal A.C."/>
        </authorList>
    </citation>
    <scope>SUMOYLATION [LARGE SCALE ANALYSIS] AT LYS-381</scope>
    <scope>IDENTIFICATION BY MASS SPECTROMETRY [LARGE SCALE ANALYSIS]</scope>
</reference>
<reference key="11">
    <citation type="journal article" date="2015" name="Cell Rep.">
        <title>SUMO-2 orchestrates chromatin modifiers in response to DNA damage.</title>
        <authorList>
            <person name="Hendriks I.A."/>
            <person name="Treffers L.W."/>
            <person name="Verlaan-de Vries M."/>
            <person name="Olsen J.V."/>
            <person name="Vertegaal A.C."/>
        </authorList>
    </citation>
    <scope>SUMOYLATION [LARGE SCALE ANALYSIS] AT LYS-381</scope>
    <scope>IDENTIFICATION BY MASS SPECTROMETRY [LARGE SCALE ANALYSIS]</scope>
</reference>
<reference key="12">
    <citation type="journal article" date="2017" name="Nat. Struct. Mol. Biol.">
        <title>Site-specific mapping of the human SUMO proteome reveals co-modification with phosphorylation.</title>
        <authorList>
            <person name="Hendriks I.A."/>
            <person name="Lyon D."/>
            <person name="Young C."/>
            <person name="Jensen L.J."/>
            <person name="Vertegaal A.C."/>
            <person name="Nielsen M.L."/>
        </authorList>
    </citation>
    <scope>SUMOYLATION [LARGE SCALE ANALYSIS] AT LYS-381 AND LYS-388</scope>
    <scope>IDENTIFICATION BY MASS SPECTROMETRY [LARGE SCALE ANALYSIS]</scope>
</reference>
<comment type="function">
    <text evidence="4">Transcriptional repressor that contribute to growth arrest during terminal macrophage differentiation by repressing target genes involved in Ras-dependent proliferation. Represses MMP1 promoter activity.</text>
</comment>
<comment type="subcellular location">
    <subcellularLocation>
        <location evidence="2">Nucleus</location>
    </subcellularLocation>
</comment>
<comment type="alternative products">
    <event type="alternative splicing"/>
    <isoform>
        <id>P41162-1</id>
        <name>1</name>
        <name>Long</name>
        <sequence type="displayed"/>
    </isoform>
    <isoform>
        <id>P41162-2</id>
        <name>2</name>
        <name>Short</name>
        <sequence type="described" ref="VSP_013351 VSP_013352"/>
    </isoform>
</comment>
<comment type="similarity">
    <text evidence="7">Belongs to the ETS family.</text>
</comment>
<comment type="sequence caution" evidence="7">
    <conflict type="frameshift">
        <sequence resource="EMBL-CDS" id="AAA60949"/>
    </conflict>
</comment>
<accession>P41162</accession>
<accession>B4E3M7</accession>
<accession>Q8TAC8</accession>
<accession>Q9BX30</accession>
<evidence type="ECO:0000250" key="1">
    <source>
        <dbReference type="UniProtKB" id="Q8R4Z4"/>
    </source>
</evidence>
<evidence type="ECO:0000255" key="2">
    <source>
        <dbReference type="PROSITE-ProRule" id="PRU00237"/>
    </source>
</evidence>
<evidence type="ECO:0000256" key="3">
    <source>
        <dbReference type="SAM" id="MobiDB-lite"/>
    </source>
</evidence>
<evidence type="ECO:0000269" key="4">
    <source>
    </source>
</evidence>
<evidence type="ECO:0000303" key="5">
    <source>
    </source>
</evidence>
<evidence type="ECO:0000303" key="6">
    <source>
    </source>
</evidence>
<evidence type="ECO:0000305" key="7"/>
<evidence type="ECO:0007744" key="8">
    <source>
    </source>
</evidence>
<evidence type="ECO:0007744" key="9">
    <source>
    </source>
</evidence>
<evidence type="ECO:0007744" key="10">
    <source>
    </source>
</evidence>
<evidence type="ECO:0007744" key="11">
    <source>
    </source>
</evidence>
<evidence type="ECO:0007744" key="12">
    <source>
    </source>
</evidence>
<evidence type="ECO:0007744" key="13">
    <source>
    </source>
</evidence>